<proteinExistence type="inferred from homology"/>
<name>LIPB_SHISS</name>
<organism>
    <name type="scientific">Shigella sonnei (strain Ss046)</name>
    <dbReference type="NCBI Taxonomy" id="300269"/>
    <lineage>
        <taxon>Bacteria</taxon>
        <taxon>Pseudomonadati</taxon>
        <taxon>Pseudomonadota</taxon>
        <taxon>Gammaproteobacteria</taxon>
        <taxon>Enterobacterales</taxon>
        <taxon>Enterobacteriaceae</taxon>
        <taxon>Shigella</taxon>
    </lineage>
</organism>
<sequence length="213" mass="23883">MYQDKILVRQLGLQPYEPISQAMHEFTDTRDDSTLDEIWLVEHYPVFTQGQAGKAEHILMPGDIPVIQSDRGGQVTYHGPGQQVMYVLLNLKRRKLGVRELVTLLEQTVVNTLAELGIEAHPRADAPGVYVGEKKICSLGLRIRRGCSFHGLALNVNMDLSPFLRINPCGYAGMEMAKISQWKPEATTNNIAPRLLENILALLNNPDFEYITA</sequence>
<protein>
    <recommendedName>
        <fullName evidence="1">Octanoyltransferase</fullName>
        <ecNumber evidence="1">2.3.1.181</ecNumber>
    </recommendedName>
    <alternativeName>
        <fullName evidence="1">Lipoate-protein ligase B</fullName>
    </alternativeName>
    <alternativeName>
        <fullName evidence="1">Lipoyl/octanoyl transferase</fullName>
    </alternativeName>
    <alternativeName>
        <fullName evidence="1">Octanoyl-[acyl-carrier-protein]-protein N-octanoyltransferase</fullName>
    </alternativeName>
</protein>
<feature type="chain" id="PRO_0000242767" description="Octanoyltransferase">
    <location>
        <begin position="1"/>
        <end position="213"/>
    </location>
</feature>
<feature type="domain" description="BPL/LPL catalytic" evidence="2">
    <location>
        <begin position="32"/>
        <end position="207"/>
    </location>
</feature>
<feature type="active site" description="Acyl-thioester intermediate" evidence="1">
    <location>
        <position position="169"/>
    </location>
</feature>
<feature type="binding site" evidence="1">
    <location>
        <begin position="71"/>
        <end position="78"/>
    </location>
    <ligand>
        <name>substrate</name>
    </ligand>
</feature>
<feature type="binding site" evidence="1">
    <location>
        <begin position="138"/>
        <end position="140"/>
    </location>
    <ligand>
        <name>substrate</name>
    </ligand>
</feature>
<feature type="binding site" evidence="1">
    <location>
        <begin position="151"/>
        <end position="153"/>
    </location>
    <ligand>
        <name>substrate</name>
    </ligand>
</feature>
<feature type="site" description="Lowers pKa of active site Cys" evidence="1">
    <location>
        <position position="135"/>
    </location>
</feature>
<reference key="1">
    <citation type="journal article" date="2005" name="Nucleic Acids Res.">
        <title>Genome dynamics and diversity of Shigella species, the etiologic agents of bacillary dysentery.</title>
        <authorList>
            <person name="Yang F."/>
            <person name="Yang J."/>
            <person name="Zhang X."/>
            <person name="Chen L."/>
            <person name="Jiang Y."/>
            <person name="Yan Y."/>
            <person name="Tang X."/>
            <person name="Wang J."/>
            <person name="Xiong Z."/>
            <person name="Dong J."/>
            <person name="Xue Y."/>
            <person name="Zhu Y."/>
            <person name="Xu X."/>
            <person name="Sun L."/>
            <person name="Chen S."/>
            <person name="Nie H."/>
            <person name="Peng J."/>
            <person name="Xu J."/>
            <person name="Wang Y."/>
            <person name="Yuan Z."/>
            <person name="Wen Y."/>
            <person name="Yao Z."/>
            <person name="Shen Y."/>
            <person name="Qiang B."/>
            <person name="Hou Y."/>
            <person name="Yu J."/>
            <person name="Jin Q."/>
        </authorList>
    </citation>
    <scope>NUCLEOTIDE SEQUENCE [LARGE SCALE GENOMIC DNA]</scope>
    <source>
        <strain>Ss046</strain>
    </source>
</reference>
<comment type="function">
    <text evidence="1">Catalyzes the transfer of endogenously produced octanoic acid from octanoyl-acyl-carrier-protein onto the lipoyl domains of lipoate-dependent enzymes. Lipoyl-ACP can also act as a substrate although octanoyl-ACP is likely to be the physiological substrate.</text>
</comment>
<comment type="catalytic activity">
    <reaction evidence="1">
        <text>octanoyl-[ACP] + L-lysyl-[protein] = N(6)-octanoyl-L-lysyl-[protein] + holo-[ACP] + H(+)</text>
        <dbReference type="Rhea" id="RHEA:17665"/>
        <dbReference type="Rhea" id="RHEA-COMP:9636"/>
        <dbReference type="Rhea" id="RHEA-COMP:9685"/>
        <dbReference type="Rhea" id="RHEA-COMP:9752"/>
        <dbReference type="Rhea" id="RHEA-COMP:9928"/>
        <dbReference type="ChEBI" id="CHEBI:15378"/>
        <dbReference type="ChEBI" id="CHEBI:29969"/>
        <dbReference type="ChEBI" id="CHEBI:64479"/>
        <dbReference type="ChEBI" id="CHEBI:78463"/>
        <dbReference type="ChEBI" id="CHEBI:78809"/>
        <dbReference type="EC" id="2.3.1.181"/>
    </reaction>
</comment>
<comment type="pathway">
    <text evidence="1">Protein modification; protein lipoylation via endogenous pathway; protein N(6)-(lipoyl)lysine from octanoyl-[acyl-carrier-protein]: step 1/2.</text>
</comment>
<comment type="subcellular location">
    <subcellularLocation>
        <location evidence="1">Cytoplasm</location>
    </subcellularLocation>
</comment>
<comment type="miscellaneous">
    <text evidence="1">In the reaction, the free carboxyl group of octanoic acid is attached via an amide linkage to the epsilon-amino group of a specific lysine residue of lipoyl domains of lipoate-dependent enzymes.</text>
</comment>
<comment type="similarity">
    <text evidence="1">Belongs to the LipB family.</text>
</comment>
<comment type="sequence caution" evidence="3">
    <conflict type="erroneous initiation">
        <sequence resource="EMBL-CDS" id="AAZ87350"/>
    </conflict>
    <text>Truncated N-terminus.</text>
</comment>
<keyword id="KW-0012">Acyltransferase</keyword>
<keyword id="KW-0963">Cytoplasm</keyword>
<keyword id="KW-1185">Reference proteome</keyword>
<keyword id="KW-0808">Transferase</keyword>
<evidence type="ECO:0000255" key="1">
    <source>
        <dbReference type="HAMAP-Rule" id="MF_00013"/>
    </source>
</evidence>
<evidence type="ECO:0000255" key="2">
    <source>
        <dbReference type="PROSITE-ProRule" id="PRU01067"/>
    </source>
</evidence>
<evidence type="ECO:0000305" key="3"/>
<dbReference type="EC" id="2.3.1.181" evidence="1"/>
<dbReference type="EMBL" id="CP000038">
    <property type="protein sequence ID" value="AAZ87350.1"/>
    <property type="status" value="ALT_INIT"/>
    <property type="molecule type" value="Genomic_DNA"/>
</dbReference>
<dbReference type="RefSeq" id="WP_000284027.1">
    <property type="nucleotide sequence ID" value="NC_007384.1"/>
</dbReference>
<dbReference type="SMR" id="Q3Z4G2"/>
<dbReference type="GeneID" id="93776852"/>
<dbReference type="KEGG" id="ssn:SSON_0584"/>
<dbReference type="HOGENOM" id="CLU_035168_3_1_6"/>
<dbReference type="UniPathway" id="UPA00538">
    <property type="reaction ID" value="UER00592"/>
</dbReference>
<dbReference type="Proteomes" id="UP000002529">
    <property type="component" value="Chromosome"/>
</dbReference>
<dbReference type="GO" id="GO:0005737">
    <property type="term" value="C:cytoplasm"/>
    <property type="evidence" value="ECO:0007669"/>
    <property type="project" value="UniProtKB-SubCell"/>
</dbReference>
<dbReference type="GO" id="GO:0033819">
    <property type="term" value="F:lipoyl(octanoyl) transferase activity"/>
    <property type="evidence" value="ECO:0007669"/>
    <property type="project" value="UniProtKB-EC"/>
</dbReference>
<dbReference type="GO" id="GO:0036211">
    <property type="term" value="P:protein modification process"/>
    <property type="evidence" value="ECO:0007669"/>
    <property type="project" value="InterPro"/>
</dbReference>
<dbReference type="CDD" id="cd16444">
    <property type="entry name" value="LipB"/>
    <property type="match status" value="1"/>
</dbReference>
<dbReference type="FunFam" id="3.30.930.10:FF:000020">
    <property type="entry name" value="Octanoyltransferase"/>
    <property type="match status" value="1"/>
</dbReference>
<dbReference type="Gene3D" id="3.30.930.10">
    <property type="entry name" value="Bira Bifunctional Protein, Domain 2"/>
    <property type="match status" value="1"/>
</dbReference>
<dbReference type="HAMAP" id="MF_00013">
    <property type="entry name" value="LipB"/>
    <property type="match status" value="1"/>
</dbReference>
<dbReference type="InterPro" id="IPR045864">
    <property type="entry name" value="aa-tRNA-synth_II/BPL/LPL"/>
</dbReference>
<dbReference type="InterPro" id="IPR004143">
    <property type="entry name" value="BPL_LPL_catalytic"/>
</dbReference>
<dbReference type="InterPro" id="IPR000544">
    <property type="entry name" value="Octanoyltransferase"/>
</dbReference>
<dbReference type="InterPro" id="IPR020605">
    <property type="entry name" value="Octanoyltransferase_CS"/>
</dbReference>
<dbReference type="NCBIfam" id="TIGR00214">
    <property type="entry name" value="lipB"/>
    <property type="match status" value="1"/>
</dbReference>
<dbReference type="NCBIfam" id="NF010922">
    <property type="entry name" value="PRK14342.1"/>
    <property type="match status" value="1"/>
</dbReference>
<dbReference type="PANTHER" id="PTHR10993:SF7">
    <property type="entry name" value="LIPOYLTRANSFERASE 2, MITOCHONDRIAL-RELATED"/>
    <property type="match status" value="1"/>
</dbReference>
<dbReference type="PANTHER" id="PTHR10993">
    <property type="entry name" value="OCTANOYLTRANSFERASE"/>
    <property type="match status" value="1"/>
</dbReference>
<dbReference type="Pfam" id="PF21948">
    <property type="entry name" value="LplA-B_cat"/>
    <property type="match status" value="1"/>
</dbReference>
<dbReference type="PIRSF" id="PIRSF016262">
    <property type="entry name" value="LPLase"/>
    <property type="match status" value="1"/>
</dbReference>
<dbReference type="SUPFAM" id="SSF55681">
    <property type="entry name" value="Class II aaRS and biotin synthetases"/>
    <property type="match status" value="1"/>
</dbReference>
<dbReference type="PROSITE" id="PS51733">
    <property type="entry name" value="BPL_LPL_CATALYTIC"/>
    <property type="match status" value="1"/>
</dbReference>
<dbReference type="PROSITE" id="PS01313">
    <property type="entry name" value="LIPB"/>
    <property type="match status" value="1"/>
</dbReference>
<gene>
    <name evidence="1" type="primary">lipB</name>
    <name type="ordered locus">SSON_0584</name>
</gene>
<accession>Q3Z4G2</accession>